<evidence type="ECO:0000255" key="1"/>
<evidence type="ECO:0000269" key="2">
    <source>
    </source>
</evidence>
<evidence type="ECO:0000269" key="3">
    <source>
    </source>
</evidence>
<evidence type="ECO:0000269" key="4">
    <source>
    </source>
</evidence>
<evidence type="ECO:0000269" key="5">
    <source ref="3"/>
</evidence>
<evidence type="ECO:0000269" key="6">
    <source ref="5"/>
</evidence>
<evidence type="ECO:0000303" key="7">
    <source>
    </source>
</evidence>
<evidence type="ECO:0000303" key="8">
    <source ref="5"/>
</evidence>
<evidence type="ECO:0000305" key="9"/>
<evidence type="ECO:0000305" key="10">
    <source>
    </source>
</evidence>
<evidence type="ECO:0000305" key="11">
    <source>
    </source>
</evidence>
<feature type="signal peptide" evidence="1">
    <location>
        <begin position="1"/>
        <end position="21"/>
    </location>
</feature>
<feature type="propeptide" id="PRO_0000400510" evidence="2 3">
    <location>
        <begin position="22"/>
        <end position="48"/>
    </location>
</feature>
<feature type="peptide" id="PRO_0000400511" description="Hainantoxin-III 4" evidence="2 3">
    <location>
        <begin position="49"/>
        <end position="81"/>
    </location>
</feature>
<feature type="modified residue" description="Leucine amide" evidence="2">
    <location>
        <position position="81"/>
    </location>
</feature>
<feature type="disulfide bond" evidence="4 6">
    <location>
        <begin position="50"/>
        <end position="65"/>
    </location>
</feature>
<feature type="disulfide bond" evidence="4 6">
    <location>
        <begin position="57"/>
        <end position="70"/>
    </location>
</feature>
<feature type="disulfide bond" evidence="4 6">
    <location>
        <begin position="64"/>
        <end position="77"/>
    </location>
</feature>
<proteinExistence type="evidence at protein level"/>
<reference key="1">
    <citation type="journal article" date="2010" name="J. Proteome Res.">
        <title>Molecular diversification of peptide toxins from the tarantula Haplopelma hainanum (Ornithoctonus hainana) venom based on transcriptomic, peptidomic, and genomic analyses.</title>
        <authorList>
            <person name="Tang X."/>
            <person name="Zhang Y."/>
            <person name="Hu W."/>
            <person name="Xu D."/>
            <person name="Tao H."/>
            <person name="Yang X."/>
            <person name="Li Y."/>
            <person name="Jiang L."/>
            <person name="Liang S."/>
        </authorList>
    </citation>
    <scope>NUCLEOTIDE SEQUENCE [LARGE SCALE MRNA]</scope>
    <scope>PROTEIN SEQUENCE OF 49-81</scope>
    <scope>IDENTIFICATION BY MASS SPECTROMETRY</scope>
    <source>
        <tissue>Venom</tissue>
        <tissue>Venom gland</tissue>
    </source>
</reference>
<reference key="2">
    <citation type="journal article" date="2003" name="Eur. J. Pharmacol.">
        <title>Inhibition of neuronal tetrodotoxin-sensitive Na+ channels by two spider toxins: hainantoxin-III and hainantoxin-IV.</title>
        <authorList>
            <person name="Xiao Y."/>
            <person name="Liang S."/>
        </authorList>
    </citation>
    <scope>PROTEIN SEQUENCE OF 49-81</scope>
    <scope>FUNCTION</scope>
    <scope>SUBCELLULAR LOCATION</scope>
    <scope>AMIDATION AT LEU-81</scope>
    <source>
        <tissue>Venom</tissue>
    </source>
</reference>
<reference key="3">
    <citation type="submission" date="2002-10" db="UniProtKB">
        <title>Function and solution structure of hainantoxin-III, a potent neuronal TTX-sensitive sodium channel antagonist from Chinese bird spider Selenocosmia hainana.</title>
        <authorList>
            <person name="Zhu Q."/>
            <person name="Liu Z.-H."/>
            <person name="Liang S.-P."/>
        </authorList>
    </citation>
    <scope>SUBUNIT</scope>
    <scope>MASS SPECTROMETRY</scope>
</reference>
<reference key="4">
    <citation type="journal article" date="2013" name="J. Biol. Chem.">
        <title>Structure and function of hainantoxin-III, a selective antagonist of neuronal tetrodotoxin-sensitive voltage-gated sodium channels isolated from the Chinese bird spider Ornithoctonus hainana.</title>
        <authorList>
            <person name="Liu Z."/>
            <person name="Cai T."/>
            <person name="Zhu Q."/>
            <person name="Deng M."/>
            <person name="Li J."/>
            <person name="Zhou X."/>
            <person name="Zhang F."/>
            <person name="Li D."/>
            <person name="Li J."/>
            <person name="Liu Y."/>
            <person name="Hu W."/>
            <person name="Liang S."/>
        </authorList>
    </citation>
    <scope>FUNCTION</scope>
    <scope>SUBCELLULAR LOCATION</scope>
    <scope>STRUCTURE BY NMR OF 49-81</scope>
    <scope>DISULFIDE BONDS</scope>
    <source>
        <tissue>Venom</tissue>
    </source>
</reference>
<reference key="5">
    <citation type="submission" date="2007-07" db="PDB data bank">
        <title>Three dimensional solution structure of hainantoxin-III by 2D 1H-NMR.</title>
        <authorList>
            <person name="Zhu Q."/>
            <person name="Liu Z."/>
            <person name="Liang S."/>
        </authorList>
    </citation>
    <scope>STRUCTURE BY NMR OF 49-81</scope>
    <scope>DISULFIDE BONDS</scope>
</reference>
<name>H3A04_CYRHA</name>
<comment type="function">
    <text evidence="4">Selective antagonist of neuronal tetrodotoxin (TTX)-sensitive voltage-gated sodium channels (IC(50)=1270 nM on Nav1.1/SCN1A, 270 nM on Nav1.2/SCN2A, 491 nM on Nav1.3/SCN3A and 232 nM on Nav1.7/SCN9A). This toxin suppress Nav1.7 current amplitude without significantly altering the activation, inactivation, and repriming kinetics. Short extreme depolarizations partially activate the toxin-bound channel, indicating voltage-dependent inhibition of this toxin. This toxin increases the deactivation of the Nav1.7 current after extreme depolarizations. The toxin-Nav1.7 complex is gradually dissociated upon prolonged strong depolarizations in a voltage-dependent manner, and the unbound toxin rebinds to Nav1.7 after a long repolarization. Moreover, analysis of chimeric channels showed that the DIIS3-S4 linker is critical for toxin binding to Nav1.7. These data are consistent with this toxin interacting with Nav1.7 site 4 and trapping the domain II voltage sensor in the closed state.</text>
</comment>
<comment type="subunit">
    <text evidence="5">Monomer.</text>
</comment>
<comment type="subcellular location">
    <subcellularLocation>
        <location evidence="2 4">Secreted</location>
    </subcellularLocation>
</comment>
<comment type="tissue specificity">
    <text evidence="10 11">Expressed by the venom gland.</text>
</comment>
<comment type="domain">
    <text evidence="4">The presence of a 'disulfide through disulfide knot' structurally defines this protein as a knottin.</text>
</comment>
<comment type="mass spectrometry" mass="3607.6" method="Electrospray" evidence="5"/>
<comment type="miscellaneous">
    <text evidence="2 4">Negative results: has no activity on Nav1.4, Nav1.5, Nav1.8 and Nav1.9 sodium and calcium currents.</text>
</comment>
<comment type="similarity">
    <text evidence="9">Belongs to the neurotoxin 10 (Hwtx-1) family. 15 (Hntx-3) subfamily.</text>
</comment>
<comment type="caution">
    <text evidence="9">Several genes are coding for this toxin for which the structure by NMR has been determined. The cross-references to PDB and additional information can be found in entry AC D2Y1X9.</text>
</comment>
<accession>D2Y1Y2</accession>
<accession>P83464</accession>
<sequence length="83" mass="9210">MKASMYLALAGLVLLFVVGYASESEEKEFPRELLSKIFAVDDFKGKERGCKGFGDSCTPGKNECCPNYACSSKHKWCKVYLGK</sequence>
<organism>
    <name type="scientific">Cyriopagopus hainanus</name>
    <name type="common">Chinese bird spider</name>
    <name type="synonym">Haplopelma hainanum</name>
    <dbReference type="NCBI Taxonomy" id="209901"/>
    <lineage>
        <taxon>Eukaryota</taxon>
        <taxon>Metazoa</taxon>
        <taxon>Ecdysozoa</taxon>
        <taxon>Arthropoda</taxon>
        <taxon>Chelicerata</taxon>
        <taxon>Arachnida</taxon>
        <taxon>Araneae</taxon>
        <taxon>Mygalomorphae</taxon>
        <taxon>Theraphosidae</taxon>
        <taxon>Haplopelma</taxon>
    </lineage>
</organism>
<dbReference type="EMBL" id="GU292859">
    <property type="protein sequence ID" value="ADB56675.1"/>
    <property type="molecule type" value="mRNA"/>
</dbReference>
<dbReference type="SMR" id="D2Y1Y2"/>
<dbReference type="ArachnoServer" id="AS000339">
    <property type="toxin name" value="mu-theraphotoxin-Hhn2a"/>
</dbReference>
<dbReference type="GO" id="GO:0005576">
    <property type="term" value="C:extracellular region"/>
    <property type="evidence" value="ECO:0007669"/>
    <property type="project" value="UniProtKB-SubCell"/>
</dbReference>
<dbReference type="GO" id="GO:0044231">
    <property type="term" value="C:host cell presynaptic membrane"/>
    <property type="evidence" value="ECO:0007669"/>
    <property type="project" value="UniProtKB-KW"/>
</dbReference>
<dbReference type="GO" id="GO:0008200">
    <property type="term" value="F:ion channel inhibitor activity"/>
    <property type="evidence" value="ECO:0007669"/>
    <property type="project" value="InterPro"/>
</dbReference>
<dbReference type="GO" id="GO:0017080">
    <property type="term" value="F:sodium channel regulator activity"/>
    <property type="evidence" value="ECO:0007669"/>
    <property type="project" value="UniProtKB-KW"/>
</dbReference>
<dbReference type="GO" id="GO:0090729">
    <property type="term" value="F:toxin activity"/>
    <property type="evidence" value="ECO:0007669"/>
    <property type="project" value="UniProtKB-KW"/>
</dbReference>
<dbReference type="InterPro" id="IPR011696">
    <property type="entry name" value="Huwentoxin-1"/>
</dbReference>
<dbReference type="InterPro" id="IPR013140">
    <property type="entry name" value="Huwentoxin_CS1"/>
</dbReference>
<dbReference type="Pfam" id="PF07740">
    <property type="entry name" value="Toxin_12"/>
    <property type="match status" value="1"/>
</dbReference>
<dbReference type="SUPFAM" id="SSF57059">
    <property type="entry name" value="omega toxin-like"/>
    <property type="match status" value="1"/>
</dbReference>
<dbReference type="PROSITE" id="PS60021">
    <property type="entry name" value="HWTX_1"/>
    <property type="match status" value="1"/>
</dbReference>
<keyword id="KW-0027">Amidation</keyword>
<keyword id="KW-0903">Direct protein sequencing</keyword>
<keyword id="KW-1015">Disulfide bond</keyword>
<keyword id="KW-0872">Ion channel impairing toxin</keyword>
<keyword id="KW-0960">Knottin</keyword>
<keyword id="KW-0528">Neurotoxin</keyword>
<keyword id="KW-0638">Presynaptic neurotoxin</keyword>
<keyword id="KW-0964">Secreted</keyword>
<keyword id="KW-0732">Signal</keyword>
<keyword id="KW-0800">Toxin</keyword>
<keyword id="KW-0738">Voltage-gated sodium channel impairing toxin</keyword>
<protein>
    <recommendedName>
        <fullName evidence="7 8">Hainantoxin-III 4</fullName>
        <shortName evidence="7 8">HnTx-III</shortName>
    </recommendedName>
    <alternativeName>
        <fullName>Hainantoxin-3.4</fullName>
    </alternativeName>
    <alternativeName>
        <fullName>Mu-theraphotoxin-Hhn2a</fullName>
        <shortName>Mu-TRTX-Hhn2a</shortName>
    </alternativeName>
    <alternativeName>
        <fullName>Peptide F7-18.76</fullName>
    </alternativeName>
</protein>